<organism>
    <name type="scientific">Elusimicrobium minutum (strain Pei191)</name>
    <dbReference type="NCBI Taxonomy" id="445932"/>
    <lineage>
        <taxon>Bacteria</taxon>
        <taxon>Pseudomonadati</taxon>
        <taxon>Elusimicrobiota</taxon>
        <taxon>Elusimicrobia</taxon>
        <taxon>Elusimicrobiales</taxon>
        <taxon>Elusimicrobiaceae</taxon>
        <taxon>Elusimicrobium</taxon>
    </lineage>
</organism>
<evidence type="ECO:0000255" key="1">
    <source>
        <dbReference type="HAMAP-Rule" id="MF_00528"/>
    </source>
</evidence>
<sequence>MKLILASKSPRRIELLTQAGYKFEIIPAQKDEKTAYKTPHRMVKDLALKKAFEVAAKYPASTVVGADTLVYCKGRVIGKPKDKADALKILHLLNNSWQTVYTGVAIVNINKKKLFTGYAATKCKARKLSDTELKLISGKHMDKAGAYAMQDKDDMLIERVEGSLTNVIGMPMELFNKMIKEFGF</sequence>
<feature type="chain" id="PRO_1000146290" description="dTTP/UTP pyrophosphatase">
    <location>
        <begin position="1"/>
        <end position="184"/>
    </location>
</feature>
<feature type="active site" description="Proton acceptor" evidence="1">
    <location>
        <position position="67"/>
    </location>
</feature>
<feature type="site" description="Important for substrate specificity" evidence="1">
    <location>
        <position position="11"/>
    </location>
</feature>
<feature type="site" description="Important for substrate specificity" evidence="1">
    <location>
        <position position="68"/>
    </location>
</feature>
<feature type="site" description="Important for substrate specificity" evidence="1">
    <location>
        <position position="150"/>
    </location>
</feature>
<keyword id="KW-0963">Cytoplasm</keyword>
<keyword id="KW-0378">Hydrolase</keyword>
<keyword id="KW-0546">Nucleotide metabolism</keyword>
<keyword id="KW-1185">Reference proteome</keyword>
<proteinExistence type="inferred from homology"/>
<name>NTPPA_ELUMP</name>
<protein>
    <recommendedName>
        <fullName evidence="1">dTTP/UTP pyrophosphatase</fullName>
        <shortName evidence="1">dTTPase/UTPase</shortName>
        <ecNumber evidence="1">3.6.1.9</ecNumber>
    </recommendedName>
    <alternativeName>
        <fullName evidence="1">Nucleoside triphosphate pyrophosphatase</fullName>
    </alternativeName>
    <alternativeName>
        <fullName evidence="1">Nucleotide pyrophosphatase</fullName>
        <shortName evidence="1">Nucleotide PPase</shortName>
    </alternativeName>
</protein>
<gene>
    <name type="ordered locus">Emin_0602</name>
</gene>
<dbReference type="EC" id="3.6.1.9" evidence="1"/>
<dbReference type="EMBL" id="CP001055">
    <property type="protein sequence ID" value="ACC98157.1"/>
    <property type="molecule type" value="Genomic_DNA"/>
</dbReference>
<dbReference type="RefSeq" id="WP_012414772.1">
    <property type="nucleotide sequence ID" value="NC_010644.1"/>
</dbReference>
<dbReference type="SMR" id="B2KC30"/>
<dbReference type="STRING" id="445932.Emin_0602"/>
<dbReference type="KEGG" id="emi:Emin_0602"/>
<dbReference type="HOGENOM" id="CLU_040416_0_0_0"/>
<dbReference type="OrthoDB" id="9807767at2"/>
<dbReference type="Proteomes" id="UP000001029">
    <property type="component" value="Chromosome"/>
</dbReference>
<dbReference type="GO" id="GO:0005737">
    <property type="term" value="C:cytoplasm"/>
    <property type="evidence" value="ECO:0007669"/>
    <property type="project" value="UniProtKB-SubCell"/>
</dbReference>
<dbReference type="GO" id="GO:0036218">
    <property type="term" value="F:dTTP diphosphatase activity"/>
    <property type="evidence" value="ECO:0007669"/>
    <property type="project" value="RHEA"/>
</dbReference>
<dbReference type="GO" id="GO:0036221">
    <property type="term" value="F:UTP diphosphatase activity"/>
    <property type="evidence" value="ECO:0007669"/>
    <property type="project" value="RHEA"/>
</dbReference>
<dbReference type="GO" id="GO:0009117">
    <property type="term" value="P:nucleotide metabolic process"/>
    <property type="evidence" value="ECO:0007669"/>
    <property type="project" value="UniProtKB-KW"/>
</dbReference>
<dbReference type="CDD" id="cd00555">
    <property type="entry name" value="Maf"/>
    <property type="match status" value="1"/>
</dbReference>
<dbReference type="Gene3D" id="3.90.950.10">
    <property type="match status" value="1"/>
</dbReference>
<dbReference type="HAMAP" id="MF_00528">
    <property type="entry name" value="Maf"/>
    <property type="match status" value="1"/>
</dbReference>
<dbReference type="InterPro" id="IPR029001">
    <property type="entry name" value="ITPase-like_fam"/>
</dbReference>
<dbReference type="InterPro" id="IPR003697">
    <property type="entry name" value="Maf-like"/>
</dbReference>
<dbReference type="NCBIfam" id="TIGR00172">
    <property type="entry name" value="maf"/>
    <property type="match status" value="1"/>
</dbReference>
<dbReference type="PANTHER" id="PTHR43213">
    <property type="entry name" value="BIFUNCTIONAL DTTP/UTP PYROPHOSPHATASE/METHYLTRANSFERASE PROTEIN-RELATED"/>
    <property type="match status" value="1"/>
</dbReference>
<dbReference type="PANTHER" id="PTHR43213:SF5">
    <property type="entry name" value="BIFUNCTIONAL DTTP_UTP PYROPHOSPHATASE_METHYLTRANSFERASE PROTEIN-RELATED"/>
    <property type="match status" value="1"/>
</dbReference>
<dbReference type="Pfam" id="PF02545">
    <property type="entry name" value="Maf"/>
    <property type="match status" value="1"/>
</dbReference>
<dbReference type="PIRSF" id="PIRSF006305">
    <property type="entry name" value="Maf"/>
    <property type="match status" value="1"/>
</dbReference>
<dbReference type="SUPFAM" id="SSF52972">
    <property type="entry name" value="ITPase-like"/>
    <property type="match status" value="1"/>
</dbReference>
<accession>B2KC30</accession>
<comment type="function">
    <text evidence="1">Nucleoside triphosphate pyrophosphatase that hydrolyzes dTTP and UTP. May have a dual role in cell division arrest and in preventing the incorporation of modified nucleotides into cellular nucleic acids.</text>
</comment>
<comment type="catalytic activity">
    <reaction evidence="1">
        <text>dTTP + H2O = dTMP + diphosphate + H(+)</text>
        <dbReference type="Rhea" id="RHEA:28534"/>
        <dbReference type="ChEBI" id="CHEBI:15377"/>
        <dbReference type="ChEBI" id="CHEBI:15378"/>
        <dbReference type="ChEBI" id="CHEBI:33019"/>
        <dbReference type="ChEBI" id="CHEBI:37568"/>
        <dbReference type="ChEBI" id="CHEBI:63528"/>
        <dbReference type="EC" id="3.6.1.9"/>
    </reaction>
</comment>
<comment type="catalytic activity">
    <reaction evidence="1">
        <text>UTP + H2O = UMP + diphosphate + H(+)</text>
        <dbReference type="Rhea" id="RHEA:29395"/>
        <dbReference type="ChEBI" id="CHEBI:15377"/>
        <dbReference type="ChEBI" id="CHEBI:15378"/>
        <dbReference type="ChEBI" id="CHEBI:33019"/>
        <dbReference type="ChEBI" id="CHEBI:46398"/>
        <dbReference type="ChEBI" id="CHEBI:57865"/>
        <dbReference type="EC" id="3.6.1.9"/>
    </reaction>
</comment>
<comment type="cofactor">
    <cofactor evidence="1">
        <name>a divalent metal cation</name>
        <dbReference type="ChEBI" id="CHEBI:60240"/>
    </cofactor>
</comment>
<comment type="subcellular location">
    <subcellularLocation>
        <location evidence="1">Cytoplasm</location>
    </subcellularLocation>
</comment>
<comment type="similarity">
    <text evidence="1">Belongs to the Maf family. YhdE subfamily.</text>
</comment>
<reference key="1">
    <citation type="journal article" date="2009" name="Appl. Environ. Microbiol.">
        <title>Genomic analysis of 'Elusimicrobium minutum,' the first cultivated representative of the phylum 'Elusimicrobia' (formerly termite group 1).</title>
        <authorList>
            <person name="Herlemann D.P.R."/>
            <person name="Geissinger O."/>
            <person name="Ikeda-Ohtsubo W."/>
            <person name="Kunin V."/>
            <person name="Sun H."/>
            <person name="Lapidus A."/>
            <person name="Hugenholtz P."/>
            <person name="Brune A."/>
        </authorList>
    </citation>
    <scope>NUCLEOTIDE SEQUENCE [LARGE SCALE GENOMIC DNA]</scope>
    <source>
        <strain>Pei191</strain>
    </source>
</reference>